<comment type="function">
    <text evidence="1">Catalyzes the conversion of epoxyqueuosine (oQ) to queuosine (Q), which is a hypermodified base found in the wobble positions of tRNA(Asp), tRNA(Asn), tRNA(His) and tRNA(Tyr).</text>
</comment>
<comment type="catalytic activity">
    <reaction evidence="1">
        <text>epoxyqueuosine(34) in tRNA + AH2 = queuosine(34) in tRNA + A + H2O</text>
        <dbReference type="Rhea" id="RHEA:32159"/>
        <dbReference type="Rhea" id="RHEA-COMP:18571"/>
        <dbReference type="Rhea" id="RHEA-COMP:18582"/>
        <dbReference type="ChEBI" id="CHEBI:13193"/>
        <dbReference type="ChEBI" id="CHEBI:15377"/>
        <dbReference type="ChEBI" id="CHEBI:17499"/>
        <dbReference type="ChEBI" id="CHEBI:194431"/>
        <dbReference type="ChEBI" id="CHEBI:194443"/>
        <dbReference type="EC" id="1.17.99.6"/>
    </reaction>
</comment>
<comment type="cofactor">
    <cofactor evidence="1">
        <name>cob(II)alamin</name>
        <dbReference type="ChEBI" id="CHEBI:16304"/>
    </cofactor>
</comment>
<comment type="cofactor">
    <cofactor evidence="1">
        <name>[4Fe-4S] cluster</name>
        <dbReference type="ChEBI" id="CHEBI:49883"/>
    </cofactor>
    <text evidence="1">Binds 2 [4Fe-4S] clusters per monomer.</text>
</comment>
<comment type="pathway">
    <text evidence="1">tRNA modification; tRNA-queuosine biosynthesis.</text>
</comment>
<comment type="subunit">
    <text evidence="1">Monomer.</text>
</comment>
<comment type="subcellular location">
    <subcellularLocation>
        <location evidence="1">Cytoplasm</location>
    </subcellularLocation>
</comment>
<comment type="similarity">
    <text evidence="1">Belongs to the QueG family.</text>
</comment>
<proteinExistence type="inferred from homology"/>
<keyword id="KW-0004">4Fe-4S</keyword>
<keyword id="KW-0963">Cytoplasm</keyword>
<keyword id="KW-0408">Iron</keyword>
<keyword id="KW-0411">Iron-sulfur</keyword>
<keyword id="KW-0479">Metal-binding</keyword>
<keyword id="KW-0560">Oxidoreductase</keyword>
<keyword id="KW-0671">Queuosine biosynthesis</keyword>
<keyword id="KW-0819">tRNA processing</keyword>
<evidence type="ECO:0000255" key="1">
    <source>
        <dbReference type="HAMAP-Rule" id="MF_00916"/>
    </source>
</evidence>
<gene>
    <name evidence="1" type="primary">queG</name>
    <name type="ordered locus">FNFX1_0776</name>
</gene>
<organism>
    <name type="scientific">Francisella cf. novicida (strain Fx1)</name>
    <dbReference type="NCBI Taxonomy" id="984129"/>
    <lineage>
        <taxon>Bacteria</taxon>
        <taxon>Pseudomonadati</taxon>
        <taxon>Pseudomonadota</taxon>
        <taxon>Gammaproteobacteria</taxon>
        <taxon>Thiotrichales</taxon>
        <taxon>Francisellaceae</taxon>
        <taxon>Francisella</taxon>
    </lineage>
</organism>
<reference key="1">
    <citation type="journal article" date="2011" name="Appl. Environ. Microbiol.">
        <title>Common ancestry and novel genetic traits of Francisella novicida-like isolates from North America and Australia as revealed by comparative genomic analyses.</title>
        <authorList>
            <person name="Siddaramappa S."/>
            <person name="Challacombe J.F."/>
            <person name="Petersen J.M."/>
            <person name="Pillai S."/>
            <person name="Hogg G."/>
            <person name="Kuske C.R."/>
        </authorList>
    </citation>
    <scope>NUCLEOTIDE SEQUENCE [LARGE SCALE GENOMIC DNA]</scope>
    <source>
        <strain>Fx1</strain>
    </source>
</reference>
<protein>
    <recommendedName>
        <fullName evidence="1">Epoxyqueuosine reductase</fullName>
        <ecNumber evidence="1">1.17.99.6</ecNumber>
    </recommendedName>
    <alternativeName>
        <fullName evidence="1">Queuosine biosynthesis protein QueG</fullName>
    </alternativeName>
</protein>
<feature type="chain" id="PRO_0000416071" description="Epoxyqueuosine reductase">
    <location>
        <begin position="1"/>
        <end position="362"/>
    </location>
</feature>
<feature type="domain" description="4Fe-4S ferredoxin-type" evidence="1">
    <location>
        <begin position="191"/>
        <end position="220"/>
    </location>
</feature>
<feature type="active site" description="Proton donor" evidence="1">
    <location>
        <position position="143"/>
    </location>
</feature>
<feature type="binding site" evidence="1">
    <location>
        <position position="200"/>
    </location>
    <ligand>
        <name>[4Fe-4S] cluster</name>
        <dbReference type="ChEBI" id="CHEBI:49883"/>
        <label>1</label>
    </ligand>
</feature>
<feature type="binding site" evidence="1">
    <location>
        <position position="203"/>
    </location>
    <ligand>
        <name>[4Fe-4S] cluster</name>
        <dbReference type="ChEBI" id="CHEBI:49883"/>
        <label>1</label>
    </ligand>
</feature>
<feature type="binding site" evidence="1">
    <location>
        <position position="206"/>
    </location>
    <ligand>
        <name>[4Fe-4S] cluster</name>
        <dbReference type="ChEBI" id="CHEBI:49883"/>
        <label>1</label>
    </ligand>
</feature>
<feature type="binding site" evidence="1">
    <location>
        <position position="210"/>
    </location>
    <ligand>
        <name>[4Fe-4S] cluster</name>
        <dbReference type="ChEBI" id="CHEBI:49883"/>
        <label>2</label>
    </ligand>
</feature>
<feature type="binding site" evidence="1">
    <location>
        <position position="226"/>
    </location>
    <ligand>
        <name>[4Fe-4S] cluster</name>
        <dbReference type="ChEBI" id="CHEBI:49883"/>
        <label>2</label>
    </ligand>
</feature>
<feature type="binding site" evidence="1">
    <location>
        <position position="253"/>
    </location>
    <ligand>
        <name>[4Fe-4S] cluster</name>
        <dbReference type="ChEBI" id="CHEBI:49883"/>
        <label>2</label>
    </ligand>
</feature>
<feature type="binding site" evidence="1">
    <location>
        <position position="256"/>
    </location>
    <ligand>
        <name>[4Fe-4S] cluster</name>
        <dbReference type="ChEBI" id="CHEBI:49883"/>
        <label>2</label>
    </ligand>
</feature>
<feature type="binding site" evidence="1">
    <location>
        <position position="260"/>
    </location>
    <ligand>
        <name>[4Fe-4S] cluster</name>
        <dbReference type="ChEBI" id="CHEBI:49883"/>
        <label>1</label>
    </ligand>
</feature>
<accession>F4BEN2</accession>
<sequence length="362" mass="41265">MKLELSLEQWQQVKDFAIRNLNLSSISKADCDLSEYIPYYNKWLENNYHADLEYMVKHGSKRFIPNELVPGTNSVIVATLNYLNRPVNVKTEVKRLRTTSNIADISIYAHGRDYHKVMKKKLQQLGEFIDELTGGHQFRVFTDSAPVLERPLAEKAGLGWQGKSSMLMNKAQGSFFFIGVIYSNLDLSKLPDSPKHQDSCGKCQACIKLCPTGAIQPGKMIDSRKCISYLTIENKGSIPLELRDKIGTRIYGCDDCQLVCPFNNYAPITTEKDFQQRDFLVNKPLLELLAWSEKDFDKYTQGSAIRRIGYAAWIRNIAIAVGNSPFNQDNIQALELKKLEFSDNQLVLEHLDWAINKQKLLS</sequence>
<dbReference type="EC" id="1.17.99.6" evidence="1"/>
<dbReference type="EMBL" id="CP002557">
    <property type="protein sequence ID" value="AEB27724.1"/>
    <property type="molecule type" value="Genomic_DNA"/>
</dbReference>
<dbReference type="RefSeq" id="WP_014549655.1">
    <property type="nucleotide sequence ID" value="NC_017450.1"/>
</dbReference>
<dbReference type="SMR" id="F4BEN2"/>
<dbReference type="KEGG" id="fcf:FNFX1_0776"/>
<dbReference type="PATRIC" id="fig|984129.3.peg.772"/>
<dbReference type="HOGENOM" id="CLU_030790_0_1_6"/>
<dbReference type="UniPathway" id="UPA00392"/>
<dbReference type="GO" id="GO:0005737">
    <property type="term" value="C:cytoplasm"/>
    <property type="evidence" value="ECO:0007669"/>
    <property type="project" value="UniProtKB-SubCell"/>
</dbReference>
<dbReference type="GO" id="GO:0051539">
    <property type="term" value="F:4 iron, 4 sulfur cluster binding"/>
    <property type="evidence" value="ECO:0007669"/>
    <property type="project" value="UniProtKB-KW"/>
</dbReference>
<dbReference type="GO" id="GO:0052693">
    <property type="term" value="F:epoxyqueuosine reductase activity"/>
    <property type="evidence" value="ECO:0007669"/>
    <property type="project" value="UniProtKB-UniRule"/>
</dbReference>
<dbReference type="GO" id="GO:0046872">
    <property type="term" value="F:metal ion binding"/>
    <property type="evidence" value="ECO:0007669"/>
    <property type="project" value="UniProtKB-KW"/>
</dbReference>
<dbReference type="GO" id="GO:0008616">
    <property type="term" value="P:queuosine biosynthetic process"/>
    <property type="evidence" value="ECO:0007669"/>
    <property type="project" value="UniProtKB-UniRule"/>
</dbReference>
<dbReference type="GO" id="GO:0006400">
    <property type="term" value="P:tRNA modification"/>
    <property type="evidence" value="ECO:0007669"/>
    <property type="project" value="UniProtKB-UniRule"/>
</dbReference>
<dbReference type="Gene3D" id="3.30.70.20">
    <property type="match status" value="1"/>
</dbReference>
<dbReference type="HAMAP" id="MF_00916">
    <property type="entry name" value="QueG"/>
    <property type="match status" value="1"/>
</dbReference>
<dbReference type="InterPro" id="IPR017896">
    <property type="entry name" value="4Fe4S_Fe-S-bd"/>
</dbReference>
<dbReference type="InterPro" id="IPR017900">
    <property type="entry name" value="4Fe4S_Fe_S_CS"/>
</dbReference>
<dbReference type="InterPro" id="IPR004453">
    <property type="entry name" value="QueG"/>
</dbReference>
<dbReference type="InterPro" id="IPR013542">
    <property type="entry name" value="QueG_DUF1730"/>
</dbReference>
<dbReference type="NCBIfam" id="TIGR00276">
    <property type="entry name" value="tRNA epoxyqueuosine(34) reductase QueG"/>
    <property type="match status" value="1"/>
</dbReference>
<dbReference type="PANTHER" id="PTHR30002">
    <property type="entry name" value="EPOXYQUEUOSINE REDUCTASE"/>
    <property type="match status" value="1"/>
</dbReference>
<dbReference type="PANTHER" id="PTHR30002:SF4">
    <property type="entry name" value="EPOXYQUEUOSINE REDUCTASE"/>
    <property type="match status" value="1"/>
</dbReference>
<dbReference type="Pfam" id="PF13484">
    <property type="entry name" value="Fer4_16"/>
    <property type="match status" value="1"/>
</dbReference>
<dbReference type="Pfam" id="PF08331">
    <property type="entry name" value="QueG_DUF1730"/>
    <property type="match status" value="1"/>
</dbReference>
<dbReference type="SUPFAM" id="SSF54862">
    <property type="entry name" value="4Fe-4S ferredoxins"/>
    <property type="match status" value="1"/>
</dbReference>
<dbReference type="PROSITE" id="PS00198">
    <property type="entry name" value="4FE4S_FER_1"/>
    <property type="match status" value="1"/>
</dbReference>
<dbReference type="PROSITE" id="PS51379">
    <property type="entry name" value="4FE4S_FER_2"/>
    <property type="match status" value="1"/>
</dbReference>
<name>QUEG_FRACF</name>